<gene>
    <name evidence="7" type="primary">ASIL2</name>
    <name evidence="9" type="ordered locus">At3g14180</name>
    <name evidence="10" type="ORF">MAG2.16</name>
</gene>
<keyword id="KW-0175">Coiled coil</keyword>
<keyword id="KW-0238">DNA-binding</keyword>
<keyword id="KW-0539">Nucleus</keyword>
<keyword id="KW-1185">Reference proteome</keyword>
<keyword id="KW-0678">Repressor</keyword>
<keyword id="KW-0804">Transcription</keyword>
<keyword id="KW-0805">Transcription regulation</keyword>
<name>ASIL2_ARATH</name>
<comment type="function">
    <text evidence="6">Transcription regulator that may repress the maturation program during early embryogenesis.</text>
</comment>
<comment type="interaction">
    <interactant intactId="EBI-4427947">
        <id>Q9LJG8</id>
    </interactant>
    <interactant intactId="EBI-4457957">
        <id>Q8GXR6</id>
        <label>At3g58630/F14P22_220</label>
    </interactant>
    <organismsDiffer>false</organismsDiffer>
    <experiments>3</experiments>
</comment>
<comment type="interaction">
    <interactant intactId="EBI-4427947">
        <id>Q9LJG8</id>
    </interactant>
    <interactant intactId="EBI-15203078">
        <id>F4IV99</id>
        <label>CHR5</label>
    </interactant>
    <organismsDiffer>false</organismsDiffer>
    <experiments>4</experiments>
</comment>
<comment type="interaction">
    <interactant intactId="EBI-4427947">
        <id>Q9LJG8</id>
    </interactant>
    <interactant intactId="EBI-1998580">
        <id>Q8VZI9</id>
        <label>ENAP1</label>
    </interactant>
    <organismsDiffer>false</organismsDiffer>
    <experiments>3</experiments>
</comment>
<comment type="interaction">
    <interactant intactId="EBI-4427947">
        <id>Q9LJG8</id>
    </interactant>
    <interactant intactId="EBI-15192119">
        <id>O65426</id>
        <label>LOL2</label>
    </interactant>
    <organismsDiffer>false</organismsDiffer>
    <experiments>3</experiments>
</comment>
<comment type="interaction">
    <interactant intactId="EBI-4427947">
        <id>Q9LJG8</id>
    </interactant>
    <interactant intactId="EBI-15192203">
        <id>F4K0Q7</id>
        <label>VFP5</label>
    </interactant>
    <organismsDiffer>false</organismsDiffer>
    <experiments>3</experiments>
</comment>
<comment type="subcellular location">
    <subcellularLocation>
        <location evidence="1 4">Nucleus</location>
    </subcellularLocation>
</comment>
<comment type="disruption phenotype">
    <text evidence="6">No visible phenotype under normal growth conditions.</text>
</comment>
<feature type="chain" id="PRO_0000430503" description="Trihelix transcription factor ASIL2">
    <location>
        <begin position="1"/>
        <end position="443"/>
    </location>
</feature>
<feature type="domain" description="Myb-like" evidence="3">
    <location>
        <begin position="84"/>
        <end position="144"/>
    </location>
</feature>
<feature type="region of interest" description="Disordered" evidence="5">
    <location>
        <begin position="1"/>
        <end position="82"/>
    </location>
</feature>
<feature type="region of interest" description="Disordered" evidence="5">
    <location>
        <begin position="238"/>
        <end position="350"/>
    </location>
</feature>
<feature type="region of interest" description="Disordered" evidence="5">
    <location>
        <begin position="413"/>
        <end position="443"/>
    </location>
</feature>
<feature type="coiled-coil region" evidence="2">
    <location>
        <begin position="360"/>
        <end position="414"/>
    </location>
</feature>
<feature type="short sequence motif" description="Bipartite nuclear localization signal" evidence="4">
    <location>
        <begin position="290"/>
        <end position="303"/>
    </location>
</feature>
<feature type="compositionally biased region" description="Polar residues" evidence="5">
    <location>
        <begin position="38"/>
        <end position="48"/>
    </location>
</feature>
<feature type="compositionally biased region" description="Gly residues" evidence="5">
    <location>
        <begin position="64"/>
        <end position="78"/>
    </location>
</feature>
<feature type="compositionally biased region" description="Gly residues" evidence="5">
    <location>
        <begin position="239"/>
        <end position="249"/>
    </location>
</feature>
<feature type="compositionally biased region" description="Low complexity" evidence="5">
    <location>
        <begin position="271"/>
        <end position="286"/>
    </location>
</feature>
<feature type="compositionally biased region" description="Basic and acidic residues" evidence="5">
    <location>
        <begin position="333"/>
        <end position="350"/>
    </location>
</feature>
<feature type="compositionally biased region" description="Low complexity" evidence="5">
    <location>
        <begin position="428"/>
        <end position="443"/>
    </location>
</feature>
<protein>
    <recommendedName>
        <fullName evidence="8">Trihelix transcription factor ASIL2</fullName>
    </recommendedName>
    <alternativeName>
        <fullName evidence="7">6B-interacting protein 1-like 2</fullName>
    </alternativeName>
    <alternativeName>
        <fullName evidence="8">Trihelix DNA-binding protein ASIL2</fullName>
    </alternativeName>
</protein>
<accession>Q9LJG8</accession>
<reference key="1">
    <citation type="journal article" date="2000" name="DNA Res.">
        <title>Structural analysis of Arabidopsis thaliana chromosome 3. II. Sequence features of the 4,251,695 bp regions covered by 90 P1, TAC and BAC clones.</title>
        <authorList>
            <person name="Kaneko T."/>
            <person name="Katoh T."/>
            <person name="Sato S."/>
            <person name="Nakamura Y."/>
            <person name="Asamizu E."/>
            <person name="Tabata S."/>
        </authorList>
    </citation>
    <scope>NUCLEOTIDE SEQUENCE [LARGE SCALE GENOMIC DNA]</scope>
    <source>
        <strain>cv. Columbia</strain>
    </source>
</reference>
<reference key="2">
    <citation type="journal article" date="2017" name="Plant J.">
        <title>Araport11: a complete reannotation of the Arabidopsis thaliana reference genome.</title>
        <authorList>
            <person name="Cheng C.Y."/>
            <person name="Krishnakumar V."/>
            <person name="Chan A.P."/>
            <person name="Thibaud-Nissen F."/>
            <person name="Schobel S."/>
            <person name="Town C.D."/>
        </authorList>
    </citation>
    <scope>GENOME REANNOTATION</scope>
    <source>
        <strain>cv. Columbia</strain>
    </source>
</reference>
<reference key="3">
    <citation type="journal article" date="2003" name="Science">
        <title>Empirical analysis of transcriptional activity in the Arabidopsis genome.</title>
        <authorList>
            <person name="Yamada K."/>
            <person name="Lim J."/>
            <person name="Dale J.M."/>
            <person name="Chen H."/>
            <person name="Shinn P."/>
            <person name="Palm C.J."/>
            <person name="Southwick A.M."/>
            <person name="Wu H.C."/>
            <person name="Kim C.J."/>
            <person name="Nguyen M."/>
            <person name="Pham P.K."/>
            <person name="Cheuk R.F."/>
            <person name="Karlin-Newmann G."/>
            <person name="Liu S.X."/>
            <person name="Lam B."/>
            <person name="Sakano H."/>
            <person name="Wu T."/>
            <person name="Yu G."/>
            <person name="Miranda M."/>
            <person name="Quach H.L."/>
            <person name="Tripp M."/>
            <person name="Chang C.H."/>
            <person name="Lee J.M."/>
            <person name="Toriumi M.J."/>
            <person name="Chan M.M."/>
            <person name="Tang C.C."/>
            <person name="Onodera C.S."/>
            <person name="Deng J.M."/>
            <person name="Akiyama K."/>
            <person name="Ansari Y."/>
            <person name="Arakawa T."/>
            <person name="Banh J."/>
            <person name="Banno F."/>
            <person name="Bowser L."/>
            <person name="Brooks S.Y."/>
            <person name="Carninci P."/>
            <person name="Chao Q."/>
            <person name="Choy N."/>
            <person name="Enju A."/>
            <person name="Goldsmith A.D."/>
            <person name="Gurjal M."/>
            <person name="Hansen N.F."/>
            <person name="Hayashizaki Y."/>
            <person name="Johnson-Hopson C."/>
            <person name="Hsuan V.W."/>
            <person name="Iida K."/>
            <person name="Karnes M."/>
            <person name="Khan S."/>
            <person name="Koesema E."/>
            <person name="Ishida J."/>
            <person name="Jiang P.X."/>
            <person name="Jones T."/>
            <person name="Kawai J."/>
            <person name="Kamiya A."/>
            <person name="Meyers C."/>
            <person name="Nakajima M."/>
            <person name="Narusaka M."/>
            <person name="Seki M."/>
            <person name="Sakurai T."/>
            <person name="Satou M."/>
            <person name="Tamse R."/>
            <person name="Vaysberg M."/>
            <person name="Wallender E.K."/>
            <person name="Wong C."/>
            <person name="Yamamura Y."/>
            <person name="Yuan S."/>
            <person name="Shinozaki K."/>
            <person name="Davis R.W."/>
            <person name="Theologis A."/>
            <person name="Ecker J.R."/>
        </authorList>
    </citation>
    <scope>NUCLEOTIDE SEQUENCE [LARGE SCALE MRNA]</scope>
    <source>
        <strain>cv. Columbia</strain>
    </source>
</reference>
<reference key="4">
    <citation type="journal article" date="2011" name="Plant Physiol.">
        <title>MicroRNAs regulate the timing of embryo maturation in Arabidopsis.</title>
        <authorList>
            <person name="Willmann M.R."/>
            <person name="Mehalick A.J."/>
            <person name="Packer R.L."/>
            <person name="Jenik P.D."/>
        </authorList>
    </citation>
    <scope>FUNCTION</scope>
    <scope>DISRUPTION PHENOTYPE</scope>
</reference>
<evidence type="ECO:0000250" key="1">
    <source>
        <dbReference type="UniProtKB" id="Q9SYG2"/>
    </source>
</evidence>
<evidence type="ECO:0000255" key="2"/>
<evidence type="ECO:0000255" key="3">
    <source>
        <dbReference type="PROSITE-ProRule" id="PRU00133"/>
    </source>
</evidence>
<evidence type="ECO:0000255" key="4">
    <source>
        <dbReference type="PROSITE-ProRule" id="PRU00768"/>
    </source>
</evidence>
<evidence type="ECO:0000256" key="5">
    <source>
        <dbReference type="SAM" id="MobiDB-lite"/>
    </source>
</evidence>
<evidence type="ECO:0000269" key="6">
    <source>
    </source>
</evidence>
<evidence type="ECO:0000303" key="7">
    <source>
    </source>
</evidence>
<evidence type="ECO:0000305" key="8"/>
<evidence type="ECO:0000312" key="9">
    <source>
        <dbReference type="Araport" id="AT3G14180"/>
    </source>
</evidence>
<evidence type="ECO:0000312" key="10">
    <source>
        <dbReference type="EMBL" id="BAB02984.1"/>
    </source>
</evidence>
<proteinExistence type="evidence at protein level"/>
<sequence>MEDDEDIRSQGSDSPDPSSSPPAGRITVTVASAGPPSYSLTPPGNSSQKDPDALALALLPIQASGGGNNSSGRPTGGGGREDCWSEAATAVLIDAWGERYLELSRGNLKQKHWKEVAEIVSSREDYGKIPKTDIQCKNRIDTVKKKYKQEKVRIANGGGRSRWVFFDKLDRLIGSTAKIPTATSGVSGPVGGLHKIPMGIPMGSRSNLYHQQAKAATPPFNNLDRLIGATARVSAASFGGSGGGGGGGSVNVPMGIPMSSRSAPFGQQGRTLPQQGRTLPQQQQQGMMVKRCSESKRWRFRKRNASDSDSESEAAMSDDSGDSLPPPPLSKRMKTEEKKKQDGDGVGNKWRELTRAIMRFGEAYEQTENAKLQQVVEMEKERMKFLKELELQRMQFFVKTQLEISQLKQQHGRRMGNTSNDHHHSRKNNINAIVNNNNDLGNN</sequence>
<organism>
    <name type="scientific">Arabidopsis thaliana</name>
    <name type="common">Mouse-ear cress</name>
    <dbReference type="NCBI Taxonomy" id="3702"/>
    <lineage>
        <taxon>Eukaryota</taxon>
        <taxon>Viridiplantae</taxon>
        <taxon>Streptophyta</taxon>
        <taxon>Embryophyta</taxon>
        <taxon>Tracheophyta</taxon>
        <taxon>Spermatophyta</taxon>
        <taxon>Magnoliopsida</taxon>
        <taxon>eudicotyledons</taxon>
        <taxon>Gunneridae</taxon>
        <taxon>Pentapetalae</taxon>
        <taxon>rosids</taxon>
        <taxon>malvids</taxon>
        <taxon>Brassicales</taxon>
        <taxon>Brassicaceae</taxon>
        <taxon>Camelineae</taxon>
        <taxon>Arabidopsis</taxon>
    </lineage>
</organism>
<dbReference type="EMBL" id="AP000600">
    <property type="protein sequence ID" value="BAB02984.1"/>
    <property type="molecule type" value="Genomic_DNA"/>
</dbReference>
<dbReference type="EMBL" id="CP002686">
    <property type="protein sequence ID" value="AEE75483.1"/>
    <property type="molecule type" value="Genomic_DNA"/>
</dbReference>
<dbReference type="EMBL" id="AY072187">
    <property type="protein sequence ID" value="AAL60009.1"/>
    <property type="molecule type" value="mRNA"/>
</dbReference>
<dbReference type="EMBL" id="AY113853">
    <property type="protein sequence ID" value="AAM44901.1"/>
    <property type="molecule type" value="mRNA"/>
</dbReference>
<dbReference type="RefSeq" id="NP_188034.1">
    <property type="nucleotide sequence ID" value="NM_112274.4"/>
</dbReference>
<dbReference type="SMR" id="Q9LJG8"/>
<dbReference type="BioGRID" id="5969">
    <property type="interactions" value="33"/>
</dbReference>
<dbReference type="FunCoup" id="Q9LJG8">
    <property type="interactions" value="937"/>
</dbReference>
<dbReference type="IntAct" id="Q9LJG8">
    <property type="interactions" value="35"/>
</dbReference>
<dbReference type="STRING" id="3702.Q9LJG8"/>
<dbReference type="iPTMnet" id="Q9LJG8"/>
<dbReference type="PaxDb" id="3702-AT3G14180.1"/>
<dbReference type="ProteomicsDB" id="246513"/>
<dbReference type="EnsemblPlants" id="AT3G14180.1">
    <property type="protein sequence ID" value="AT3G14180.1"/>
    <property type="gene ID" value="AT3G14180"/>
</dbReference>
<dbReference type="GeneID" id="820635"/>
<dbReference type="Gramene" id="AT3G14180.1">
    <property type="protein sequence ID" value="AT3G14180.1"/>
    <property type="gene ID" value="AT3G14180"/>
</dbReference>
<dbReference type="KEGG" id="ath:AT3G14180"/>
<dbReference type="Araport" id="AT3G14180"/>
<dbReference type="TAIR" id="AT3G14180">
    <property type="gene designation" value="ASIL2"/>
</dbReference>
<dbReference type="eggNOG" id="KOG4282">
    <property type="taxonomic scope" value="Eukaryota"/>
</dbReference>
<dbReference type="HOGENOM" id="CLU_042856_1_0_1"/>
<dbReference type="InParanoid" id="Q9LJG8"/>
<dbReference type="OMA" id="CSESKRW"/>
<dbReference type="OrthoDB" id="2019351at2759"/>
<dbReference type="PhylomeDB" id="Q9LJG8"/>
<dbReference type="CD-CODE" id="4299E36E">
    <property type="entry name" value="Nucleolus"/>
</dbReference>
<dbReference type="PRO" id="PR:Q9LJG8"/>
<dbReference type="Proteomes" id="UP000006548">
    <property type="component" value="Chromosome 3"/>
</dbReference>
<dbReference type="ExpressionAtlas" id="Q9LJG8">
    <property type="expression patterns" value="baseline and differential"/>
</dbReference>
<dbReference type="GO" id="GO:0005634">
    <property type="term" value="C:nucleus"/>
    <property type="evidence" value="ECO:0007669"/>
    <property type="project" value="UniProtKB-SubCell"/>
</dbReference>
<dbReference type="GO" id="GO:0003700">
    <property type="term" value="F:DNA-binding transcription factor activity"/>
    <property type="evidence" value="ECO:0000250"/>
    <property type="project" value="TAIR"/>
</dbReference>
<dbReference type="GO" id="GO:0000976">
    <property type="term" value="F:transcription cis-regulatory region binding"/>
    <property type="evidence" value="ECO:0000353"/>
    <property type="project" value="TAIR"/>
</dbReference>
<dbReference type="GO" id="GO:0009793">
    <property type="term" value="P:embryo development ending in seed dormancy"/>
    <property type="evidence" value="ECO:0000315"/>
    <property type="project" value="TAIR"/>
</dbReference>
<dbReference type="GO" id="GO:0006355">
    <property type="term" value="P:regulation of DNA-templated transcription"/>
    <property type="evidence" value="ECO:0000304"/>
    <property type="project" value="TAIR"/>
</dbReference>
<dbReference type="GO" id="GO:0010431">
    <property type="term" value="P:seed maturation"/>
    <property type="evidence" value="ECO:0000315"/>
    <property type="project" value="TAIR"/>
</dbReference>
<dbReference type="FunFam" id="1.10.10.60:FF:000104">
    <property type="entry name" value="trihelix transcription factor ASIL2"/>
    <property type="match status" value="1"/>
</dbReference>
<dbReference type="Gene3D" id="1.10.10.60">
    <property type="entry name" value="Homeodomain-like"/>
    <property type="match status" value="1"/>
</dbReference>
<dbReference type="InterPro" id="IPR044823">
    <property type="entry name" value="ASIL1/2-like"/>
</dbReference>
<dbReference type="InterPro" id="IPR044822">
    <property type="entry name" value="Myb_DNA-bind_4"/>
</dbReference>
<dbReference type="PANTHER" id="PTHR31307">
    <property type="entry name" value="TRIHELIX TRANSCRIPTION FACTOR ASIL2"/>
    <property type="match status" value="1"/>
</dbReference>
<dbReference type="PANTHER" id="PTHR31307:SF4">
    <property type="entry name" value="TRIHELIX TRANSCRIPTION FACTOR ASIL2"/>
    <property type="match status" value="1"/>
</dbReference>
<dbReference type="Pfam" id="PF13837">
    <property type="entry name" value="Myb_DNA-bind_4"/>
    <property type="match status" value="1"/>
</dbReference>